<sequence>MSALDNRLFAKMNGIGNEIVVVDLRDQPAPVTPDDARAVAAHLPYDQLMLLQPARLPGTEAFVRIYNNDGSEAGACGNGMRCVARQMFASTDKQGLTFETRAGLLNCWRGPADGLYTVDMGEPKFGWKDIPLAEEFRDTRSIELQIGPIDAPLLHTPSVVSMGNPHAIFWVDDIEAHDLGRFGPLLENHPIFPERANITLAHIVDRDHITMRTWERGAGLTRACGSAACATAVAAARLKRADRVVEMTLPGGQLSIAWRESDNHVLMTGGATFEFEGRFDPALFARSRDKTSA</sequence>
<name>DAPF_RHOPS</name>
<feature type="chain" id="PRO_1000011950" description="Diaminopimelate epimerase">
    <location>
        <begin position="1"/>
        <end position="293"/>
    </location>
</feature>
<feature type="active site" description="Proton donor" evidence="1">
    <location>
        <position position="76"/>
    </location>
</feature>
<feature type="active site" description="Proton acceptor" evidence="1">
    <location>
        <position position="224"/>
    </location>
</feature>
<feature type="binding site" evidence="1">
    <location>
        <position position="17"/>
    </location>
    <ligand>
        <name>substrate</name>
    </ligand>
</feature>
<feature type="binding site" evidence="1">
    <location>
        <position position="47"/>
    </location>
    <ligand>
        <name>substrate</name>
    </ligand>
</feature>
<feature type="binding site" evidence="1">
    <location>
        <position position="67"/>
    </location>
    <ligand>
        <name>substrate</name>
    </ligand>
</feature>
<feature type="binding site" evidence="1">
    <location>
        <begin position="77"/>
        <end position="78"/>
    </location>
    <ligand>
        <name>substrate</name>
    </ligand>
</feature>
<feature type="binding site" evidence="1">
    <location>
        <position position="164"/>
    </location>
    <ligand>
        <name>substrate</name>
    </ligand>
</feature>
<feature type="binding site" evidence="1">
    <location>
        <position position="197"/>
    </location>
    <ligand>
        <name>substrate</name>
    </ligand>
</feature>
<feature type="binding site" evidence="1">
    <location>
        <begin position="215"/>
        <end position="216"/>
    </location>
    <ligand>
        <name>substrate</name>
    </ligand>
</feature>
<feature type="binding site" evidence="1">
    <location>
        <begin position="225"/>
        <end position="226"/>
    </location>
    <ligand>
        <name>substrate</name>
    </ligand>
</feature>
<feature type="site" description="Could be important to modulate the pK values of the two catalytic cysteine residues" evidence="1">
    <location>
        <position position="166"/>
    </location>
</feature>
<feature type="site" description="Could be important to modulate the pK values of the two catalytic cysteine residues" evidence="1">
    <location>
        <position position="215"/>
    </location>
</feature>
<proteinExistence type="inferred from homology"/>
<keyword id="KW-0028">Amino-acid biosynthesis</keyword>
<keyword id="KW-0963">Cytoplasm</keyword>
<keyword id="KW-0413">Isomerase</keyword>
<keyword id="KW-0457">Lysine biosynthesis</keyword>
<gene>
    <name evidence="1" type="primary">dapF</name>
    <name type="ordered locus">RPD_0514</name>
</gene>
<reference key="1">
    <citation type="submission" date="2006-03" db="EMBL/GenBank/DDBJ databases">
        <title>Complete sequence of Rhodopseudomonas palustris BisB5.</title>
        <authorList>
            <consortium name="US DOE Joint Genome Institute"/>
            <person name="Copeland A."/>
            <person name="Lucas S."/>
            <person name="Lapidus A."/>
            <person name="Barry K."/>
            <person name="Detter J.C."/>
            <person name="Glavina del Rio T."/>
            <person name="Hammon N."/>
            <person name="Israni S."/>
            <person name="Dalin E."/>
            <person name="Tice H."/>
            <person name="Pitluck S."/>
            <person name="Chain P."/>
            <person name="Malfatti S."/>
            <person name="Shin M."/>
            <person name="Vergez L."/>
            <person name="Schmutz J."/>
            <person name="Larimer F."/>
            <person name="Land M."/>
            <person name="Hauser L."/>
            <person name="Pelletier D.A."/>
            <person name="Kyrpides N."/>
            <person name="Lykidis A."/>
            <person name="Oda Y."/>
            <person name="Harwood C.S."/>
            <person name="Richardson P."/>
        </authorList>
    </citation>
    <scope>NUCLEOTIDE SEQUENCE [LARGE SCALE GENOMIC DNA]</scope>
    <source>
        <strain>BisB5</strain>
    </source>
</reference>
<accession>Q13DT7</accession>
<comment type="function">
    <text evidence="1">Catalyzes the stereoinversion of LL-2,6-diaminopimelate (L,L-DAP) to meso-diaminopimelate (meso-DAP), a precursor of L-lysine and an essential component of the bacterial peptidoglycan.</text>
</comment>
<comment type="catalytic activity">
    <reaction evidence="1">
        <text>(2S,6S)-2,6-diaminopimelate = meso-2,6-diaminopimelate</text>
        <dbReference type="Rhea" id="RHEA:15393"/>
        <dbReference type="ChEBI" id="CHEBI:57609"/>
        <dbReference type="ChEBI" id="CHEBI:57791"/>
        <dbReference type="EC" id="5.1.1.7"/>
    </reaction>
</comment>
<comment type="pathway">
    <text evidence="1">Amino-acid biosynthesis; L-lysine biosynthesis via DAP pathway; DL-2,6-diaminopimelate from LL-2,6-diaminopimelate: step 1/1.</text>
</comment>
<comment type="subunit">
    <text evidence="1">Homodimer.</text>
</comment>
<comment type="subcellular location">
    <subcellularLocation>
        <location evidence="1">Cytoplasm</location>
    </subcellularLocation>
</comment>
<comment type="similarity">
    <text evidence="1">Belongs to the diaminopimelate epimerase family.</text>
</comment>
<protein>
    <recommendedName>
        <fullName evidence="1">Diaminopimelate epimerase</fullName>
        <shortName evidence="1">DAP epimerase</shortName>
        <ecNumber evidence="1">5.1.1.7</ecNumber>
    </recommendedName>
    <alternativeName>
        <fullName evidence="1">PLP-independent amino acid racemase</fullName>
    </alternativeName>
</protein>
<dbReference type="EC" id="5.1.1.7" evidence="1"/>
<dbReference type="EMBL" id="CP000283">
    <property type="protein sequence ID" value="ABE37752.1"/>
    <property type="molecule type" value="Genomic_DNA"/>
</dbReference>
<dbReference type="SMR" id="Q13DT7"/>
<dbReference type="STRING" id="316057.RPD_0514"/>
<dbReference type="KEGG" id="rpd:RPD_0514"/>
<dbReference type="eggNOG" id="COG0253">
    <property type="taxonomic scope" value="Bacteria"/>
</dbReference>
<dbReference type="HOGENOM" id="CLU_053306_1_0_5"/>
<dbReference type="BioCyc" id="RPAL316057:RPD_RS02635-MONOMER"/>
<dbReference type="UniPathway" id="UPA00034">
    <property type="reaction ID" value="UER00025"/>
</dbReference>
<dbReference type="Proteomes" id="UP000001818">
    <property type="component" value="Chromosome"/>
</dbReference>
<dbReference type="GO" id="GO:0005829">
    <property type="term" value="C:cytosol"/>
    <property type="evidence" value="ECO:0007669"/>
    <property type="project" value="TreeGrafter"/>
</dbReference>
<dbReference type="GO" id="GO:0008837">
    <property type="term" value="F:diaminopimelate epimerase activity"/>
    <property type="evidence" value="ECO:0007669"/>
    <property type="project" value="UniProtKB-UniRule"/>
</dbReference>
<dbReference type="GO" id="GO:0009089">
    <property type="term" value="P:lysine biosynthetic process via diaminopimelate"/>
    <property type="evidence" value="ECO:0007669"/>
    <property type="project" value="UniProtKB-UniRule"/>
</dbReference>
<dbReference type="FunFam" id="3.10.310.10:FF:000004">
    <property type="entry name" value="Diaminopimelate epimerase"/>
    <property type="match status" value="1"/>
</dbReference>
<dbReference type="Gene3D" id="3.10.310.10">
    <property type="entry name" value="Diaminopimelate Epimerase, Chain A, domain 1"/>
    <property type="match status" value="2"/>
</dbReference>
<dbReference type="HAMAP" id="MF_00197">
    <property type="entry name" value="DAP_epimerase"/>
    <property type="match status" value="1"/>
</dbReference>
<dbReference type="InterPro" id="IPR018510">
    <property type="entry name" value="DAP_epimerase_AS"/>
</dbReference>
<dbReference type="InterPro" id="IPR001653">
    <property type="entry name" value="DAP_epimerase_DapF"/>
</dbReference>
<dbReference type="NCBIfam" id="TIGR00652">
    <property type="entry name" value="DapF"/>
    <property type="match status" value="1"/>
</dbReference>
<dbReference type="PANTHER" id="PTHR31689:SF0">
    <property type="entry name" value="DIAMINOPIMELATE EPIMERASE"/>
    <property type="match status" value="1"/>
</dbReference>
<dbReference type="PANTHER" id="PTHR31689">
    <property type="entry name" value="DIAMINOPIMELATE EPIMERASE, CHLOROPLASTIC"/>
    <property type="match status" value="1"/>
</dbReference>
<dbReference type="Pfam" id="PF01678">
    <property type="entry name" value="DAP_epimerase"/>
    <property type="match status" value="2"/>
</dbReference>
<dbReference type="SUPFAM" id="SSF54506">
    <property type="entry name" value="Diaminopimelate epimerase-like"/>
    <property type="match status" value="2"/>
</dbReference>
<dbReference type="PROSITE" id="PS01326">
    <property type="entry name" value="DAP_EPIMERASE"/>
    <property type="match status" value="1"/>
</dbReference>
<organism>
    <name type="scientific">Rhodopseudomonas palustris (strain BisB5)</name>
    <dbReference type="NCBI Taxonomy" id="316057"/>
    <lineage>
        <taxon>Bacteria</taxon>
        <taxon>Pseudomonadati</taxon>
        <taxon>Pseudomonadota</taxon>
        <taxon>Alphaproteobacteria</taxon>
        <taxon>Hyphomicrobiales</taxon>
        <taxon>Nitrobacteraceae</taxon>
        <taxon>Rhodopseudomonas</taxon>
    </lineage>
</organism>
<evidence type="ECO:0000255" key="1">
    <source>
        <dbReference type="HAMAP-Rule" id="MF_00197"/>
    </source>
</evidence>